<sequence>MDPQYARLVKAAALSATVLASILLIIKIFAWWHTGSVSLLAALVDSLVDLAASLTNLFVVRYSLQPADEEHTFGHGKAESLAALAQSMFISGSALFLFLTGFQHLASPEPLQDPGLGIWVTLIALFSTLILVTFQRWVVRKTQSQAIRADMLHYQSDVMMNGAILIALALSWYGFHRADALFALGIGAYILYSALRMGYEAVQALLDRALPDDERQEIINIVTSWPGVIGAHDLRTRQSGPTRFIQLHLEMEDMLPLMEAHILADQVERALLHRFPGADILIHQDPTAVVPKERHAHWEL</sequence>
<keyword id="KW-0997">Cell inner membrane</keyword>
<keyword id="KW-1003">Cell membrane</keyword>
<keyword id="KW-0406">Ion transport</keyword>
<keyword id="KW-0408">Iron</keyword>
<keyword id="KW-0410">Iron transport</keyword>
<keyword id="KW-0472">Membrane</keyword>
<keyword id="KW-0479">Metal-binding</keyword>
<keyword id="KW-0812">Transmembrane</keyword>
<keyword id="KW-1133">Transmembrane helix</keyword>
<keyword id="KW-0813">Transport</keyword>
<keyword id="KW-0862">Zinc</keyword>
<keyword id="KW-0864">Zinc transport</keyword>
<name>FIEF_YERE8</name>
<gene>
    <name evidence="1" type="primary">fieF</name>
    <name type="ordered locus">YE0088</name>
</gene>
<feature type="chain" id="PRO_1000087423" description="Cation-efflux pump FieF">
    <location>
        <begin position="1"/>
        <end position="300"/>
    </location>
</feature>
<feature type="transmembrane region" description="Helical" evidence="1">
    <location>
        <begin position="12"/>
        <end position="32"/>
    </location>
</feature>
<feature type="transmembrane region" description="Helical" evidence="1">
    <location>
        <begin position="40"/>
        <end position="60"/>
    </location>
</feature>
<feature type="transmembrane region" description="Helical" evidence="1">
    <location>
        <begin position="82"/>
        <end position="102"/>
    </location>
</feature>
<feature type="transmembrane region" description="Helical" evidence="1">
    <location>
        <begin position="114"/>
        <end position="134"/>
    </location>
</feature>
<feature type="transmembrane region" description="Helical" evidence="1">
    <location>
        <begin position="164"/>
        <end position="184"/>
    </location>
</feature>
<feature type="binding site" evidence="1">
    <location>
        <position position="45"/>
    </location>
    <ligand>
        <name>Zn(2+)</name>
        <dbReference type="ChEBI" id="CHEBI:29105"/>
    </ligand>
</feature>
<feature type="binding site" evidence="1">
    <location>
        <position position="49"/>
    </location>
    <ligand>
        <name>Zn(2+)</name>
        <dbReference type="ChEBI" id="CHEBI:29105"/>
    </ligand>
</feature>
<feature type="binding site" evidence="1">
    <location>
        <position position="153"/>
    </location>
    <ligand>
        <name>Zn(2+)</name>
        <dbReference type="ChEBI" id="CHEBI:29105"/>
    </ligand>
</feature>
<feature type="binding site" evidence="1">
    <location>
        <position position="157"/>
    </location>
    <ligand>
        <name>Zn(2+)</name>
        <dbReference type="ChEBI" id="CHEBI:29105"/>
    </ligand>
</feature>
<dbReference type="EMBL" id="AM286415">
    <property type="protein sequence ID" value="CAL10230.1"/>
    <property type="molecule type" value="Genomic_DNA"/>
</dbReference>
<dbReference type="RefSeq" id="WP_011815283.1">
    <property type="nucleotide sequence ID" value="NC_008800.1"/>
</dbReference>
<dbReference type="RefSeq" id="YP_001004482.1">
    <property type="nucleotide sequence ID" value="NC_008800.1"/>
</dbReference>
<dbReference type="SMR" id="A1JHZ2"/>
<dbReference type="KEGG" id="yen:YE0088"/>
<dbReference type="PATRIC" id="fig|393305.7.peg.177"/>
<dbReference type="eggNOG" id="COG0053">
    <property type="taxonomic scope" value="Bacteria"/>
</dbReference>
<dbReference type="HOGENOM" id="CLU_013430_3_0_6"/>
<dbReference type="OrthoDB" id="9806522at2"/>
<dbReference type="Proteomes" id="UP000000642">
    <property type="component" value="Chromosome"/>
</dbReference>
<dbReference type="GO" id="GO:0005886">
    <property type="term" value="C:plasma membrane"/>
    <property type="evidence" value="ECO:0007669"/>
    <property type="project" value="UniProtKB-SubCell"/>
</dbReference>
<dbReference type="GO" id="GO:0015086">
    <property type="term" value="F:cadmium ion transmembrane transporter activity"/>
    <property type="evidence" value="ECO:0007669"/>
    <property type="project" value="UniProtKB-UniRule"/>
</dbReference>
<dbReference type="GO" id="GO:0015093">
    <property type="term" value="F:ferrous iron transmembrane transporter activity"/>
    <property type="evidence" value="ECO:0007669"/>
    <property type="project" value="TreeGrafter"/>
</dbReference>
<dbReference type="GO" id="GO:0046872">
    <property type="term" value="F:metal ion binding"/>
    <property type="evidence" value="ECO:0007669"/>
    <property type="project" value="UniProtKB-KW"/>
</dbReference>
<dbReference type="GO" id="GO:0015341">
    <property type="term" value="F:zinc efflux antiporter activity"/>
    <property type="evidence" value="ECO:0007669"/>
    <property type="project" value="TreeGrafter"/>
</dbReference>
<dbReference type="GO" id="GO:0006882">
    <property type="term" value="P:intracellular zinc ion homeostasis"/>
    <property type="evidence" value="ECO:0007669"/>
    <property type="project" value="TreeGrafter"/>
</dbReference>
<dbReference type="FunFam" id="1.20.1510.10:FF:000001">
    <property type="entry name" value="Ferrous-iron efflux pump FieF"/>
    <property type="match status" value="1"/>
</dbReference>
<dbReference type="FunFam" id="3.30.70.1350:FF:000002">
    <property type="entry name" value="Ferrous-iron efflux pump FieF"/>
    <property type="match status" value="1"/>
</dbReference>
<dbReference type="Gene3D" id="1.20.1510.10">
    <property type="entry name" value="Cation efflux protein transmembrane domain"/>
    <property type="match status" value="1"/>
</dbReference>
<dbReference type="Gene3D" id="3.30.70.1350">
    <property type="entry name" value="Cation efflux protein, cytoplasmic domain"/>
    <property type="match status" value="1"/>
</dbReference>
<dbReference type="HAMAP" id="MF_01425">
    <property type="entry name" value="Cation_efflux_FieF"/>
    <property type="match status" value="1"/>
</dbReference>
<dbReference type="InterPro" id="IPR002524">
    <property type="entry name" value="Cation_efflux"/>
</dbReference>
<dbReference type="InterPro" id="IPR027470">
    <property type="entry name" value="Cation_efflux_CTD"/>
</dbReference>
<dbReference type="InterPro" id="IPR036837">
    <property type="entry name" value="Cation_efflux_CTD_sf"/>
</dbReference>
<dbReference type="InterPro" id="IPR023783">
    <property type="entry name" value="Cation_efflux_FieF"/>
</dbReference>
<dbReference type="InterPro" id="IPR027469">
    <property type="entry name" value="Cation_efflux_TMD_sf"/>
</dbReference>
<dbReference type="InterPro" id="IPR050291">
    <property type="entry name" value="CDF_Transporter"/>
</dbReference>
<dbReference type="NCBIfam" id="TIGR01297">
    <property type="entry name" value="CDF"/>
    <property type="match status" value="1"/>
</dbReference>
<dbReference type="NCBIfam" id="NF007064">
    <property type="entry name" value="PRK09509.1"/>
    <property type="match status" value="1"/>
</dbReference>
<dbReference type="PANTHER" id="PTHR43840:SF41">
    <property type="entry name" value="CATION-EFFLUX PUMP FIEF"/>
    <property type="match status" value="1"/>
</dbReference>
<dbReference type="PANTHER" id="PTHR43840">
    <property type="entry name" value="MITOCHONDRIAL METAL TRANSPORTER 1-RELATED"/>
    <property type="match status" value="1"/>
</dbReference>
<dbReference type="Pfam" id="PF01545">
    <property type="entry name" value="Cation_efflux"/>
    <property type="match status" value="1"/>
</dbReference>
<dbReference type="Pfam" id="PF16916">
    <property type="entry name" value="ZT_dimer"/>
    <property type="match status" value="1"/>
</dbReference>
<dbReference type="SUPFAM" id="SSF160240">
    <property type="entry name" value="Cation efflux protein cytoplasmic domain-like"/>
    <property type="match status" value="1"/>
</dbReference>
<dbReference type="SUPFAM" id="SSF161111">
    <property type="entry name" value="Cation efflux protein transmembrane domain-like"/>
    <property type="match status" value="1"/>
</dbReference>
<reference key="1">
    <citation type="journal article" date="2006" name="PLoS Genet.">
        <title>The complete genome sequence and comparative genome analysis of the high pathogenicity Yersinia enterocolitica strain 8081.</title>
        <authorList>
            <person name="Thomson N.R."/>
            <person name="Howard S."/>
            <person name="Wren B.W."/>
            <person name="Holden M.T.G."/>
            <person name="Crossman L."/>
            <person name="Challis G.L."/>
            <person name="Churcher C."/>
            <person name="Mungall K."/>
            <person name="Brooks K."/>
            <person name="Chillingworth T."/>
            <person name="Feltwell T."/>
            <person name="Abdellah Z."/>
            <person name="Hauser H."/>
            <person name="Jagels K."/>
            <person name="Maddison M."/>
            <person name="Moule S."/>
            <person name="Sanders M."/>
            <person name="Whitehead S."/>
            <person name="Quail M.A."/>
            <person name="Dougan G."/>
            <person name="Parkhill J."/>
            <person name="Prentice M.B."/>
        </authorList>
    </citation>
    <scope>NUCLEOTIDE SEQUENCE [LARGE SCALE GENOMIC DNA]</scope>
    <source>
        <strain>NCTC 13174 / 8081</strain>
    </source>
</reference>
<proteinExistence type="inferred from homology"/>
<comment type="function">
    <text evidence="1">Divalent metal cation transporter which exports Zn(2+), Cd(2+) and possibly Fe(2+). May be involved in zinc and iron detoxification by efflux.</text>
</comment>
<comment type="catalytic activity">
    <reaction evidence="1">
        <text>Zn(2+)(in) + H(+)(out) = Zn(2+)(out) + H(+)(in)</text>
        <dbReference type="Rhea" id="RHEA:28839"/>
        <dbReference type="ChEBI" id="CHEBI:15378"/>
        <dbReference type="ChEBI" id="CHEBI:29105"/>
    </reaction>
</comment>
<comment type="catalytic activity">
    <reaction evidence="1">
        <text>Cd(2+)(in) + H(+)(out) = Cd(2+)(out) + H(+)(in)</text>
        <dbReference type="Rhea" id="RHEA:28739"/>
        <dbReference type="ChEBI" id="CHEBI:15378"/>
        <dbReference type="ChEBI" id="CHEBI:48775"/>
    </reaction>
</comment>
<comment type="catalytic activity">
    <reaction evidence="1">
        <text>Fe(2+)(in) + H(+)(out) = Fe(2+)(out) + H(+)(in)</text>
        <dbReference type="Rhea" id="RHEA:29439"/>
        <dbReference type="ChEBI" id="CHEBI:15378"/>
        <dbReference type="ChEBI" id="CHEBI:29033"/>
    </reaction>
</comment>
<comment type="subunit">
    <text evidence="1">Homodimer.</text>
</comment>
<comment type="subcellular location">
    <subcellularLocation>
        <location evidence="1">Cell inner membrane</location>
        <topology evidence="1">Multi-pass membrane protein</topology>
    </subcellularLocation>
</comment>
<comment type="similarity">
    <text evidence="1">Belongs to the cation diffusion facilitator (CDF) transporter (TC 2.A.4) family. FieF subfamily.</text>
</comment>
<protein>
    <recommendedName>
        <fullName evidence="1">Cation-efflux pump FieF</fullName>
    </recommendedName>
</protein>
<evidence type="ECO:0000255" key="1">
    <source>
        <dbReference type="HAMAP-Rule" id="MF_01425"/>
    </source>
</evidence>
<organism>
    <name type="scientific">Yersinia enterocolitica serotype O:8 / biotype 1B (strain NCTC 13174 / 8081)</name>
    <dbReference type="NCBI Taxonomy" id="393305"/>
    <lineage>
        <taxon>Bacteria</taxon>
        <taxon>Pseudomonadati</taxon>
        <taxon>Pseudomonadota</taxon>
        <taxon>Gammaproteobacteria</taxon>
        <taxon>Enterobacterales</taxon>
        <taxon>Yersiniaceae</taxon>
        <taxon>Yersinia</taxon>
    </lineage>
</organism>
<accession>A1JHZ2</accession>